<feature type="signal peptide" evidence="2">
    <location>
        <begin position="1"/>
        <end position="20"/>
    </location>
</feature>
<feature type="propeptide" id="PRO_0000404840" evidence="1">
    <location>
        <begin position="21"/>
        <end position="44"/>
    </location>
</feature>
<feature type="peptide" id="PRO_0000404841" description="Conotoxin ArMSGL-0124">
    <location>
        <begin position="47"/>
        <end position="78"/>
    </location>
</feature>
<feature type="modified residue" description="Leucine amide" evidence="1">
    <location>
        <position position="78"/>
    </location>
</feature>
<feature type="disulfide bond" evidence="1">
    <location>
        <begin position="52"/>
        <end position="64"/>
    </location>
</feature>
<feature type="disulfide bond" evidence="1">
    <location>
        <begin position="56"/>
        <end position="73"/>
    </location>
</feature>
<feature type="disulfide bond" evidence="1">
    <location>
        <begin position="63"/>
        <end position="77"/>
    </location>
</feature>
<evidence type="ECO:0000250" key="1"/>
<evidence type="ECO:0000255" key="2"/>
<evidence type="ECO:0000305" key="3"/>
<reference key="1">
    <citation type="journal article" date="2001" name="Mol. Biol. Evol.">
        <title>Mechanisms for evolving hypervariability: the case of conopeptides.</title>
        <authorList>
            <person name="Conticello S.G."/>
            <person name="Gilad Y."/>
            <person name="Avidan N."/>
            <person name="Ben-Asher E."/>
            <person name="Levy Z."/>
            <person name="Fainzilber M."/>
        </authorList>
    </citation>
    <scope>NUCLEOTIDE SEQUENCE [MRNA]</scope>
    <source>
        <tissue>Venom duct</tissue>
    </source>
</reference>
<accession>Q9BP72</accession>
<organism>
    <name type="scientific">Conus arenatus</name>
    <name type="common">Sand-dusted cone</name>
    <dbReference type="NCBI Taxonomy" id="89451"/>
    <lineage>
        <taxon>Eukaryota</taxon>
        <taxon>Metazoa</taxon>
        <taxon>Spiralia</taxon>
        <taxon>Lophotrochozoa</taxon>
        <taxon>Mollusca</taxon>
        <taxon>Gastropoda</taxon>
        <taxon>Caenogastropoda</taxon>
        <taxon>Neogastropoda</taxon>
        <taxon>Conoidea</taxon>
        <taxon>Conidae</taxon>
        <taxon>Conus</taxon>
    </lineage>
</organism>
<keyword id="KW-0027">Amidation</keyword>
<keyword id="KW-0165">Cleavage on pair of basic residues</keyword>
<keyword id="KW-1015">Disulfide bond</keyword>
<keyword id="KW-0960">Knottin</keyword>
<keyword id="KW-0528">Neurotoxin</keyword>
<keyword id="KW-0964">Secreted</keyword>
<keyword id="KW-0732">Signal</keyword>
<keyword id="KW-0800">Toxin</keyword>
<name>O3620_CONAE</name>
<comment type="subcellular location">
    <subcellularLocation>
        <location evidence="1">Secreted</location>
    </subcellularLocation>
</comment>
<comment type="tissue specificity">
    <text>Expressed by the venom duct.</text>
</comment>
<comment type="domain">
    <text evidence="1">The presence of a 'disulfide through disulfide knot' structurally defines this protein as a knottin.</text>
</comment>
<comment type="domain">
    <text>The cysteine framework is VI/VII (C-C-CC-C-C).</text>
</comment>
<comment type="similarity">
    <text evidence="3">Belongs to the conotoxin O3 superfamily.</text>
</comment>
<sequence length="79" mass="8958">MSRLGIMVLTLLLLVYMATSHQDAGEKQATQRDAINFRWKRSLTRRTATEECEESCEEEEKTCCGEXDGEPVCARFCLG</sequence>
<proteinExistence type="evidence at transcript level"/>
<dbReference type="EMBL" id="AF215066">
    <property type="protein sequence ID" value="AAG60494.1"/>
    <property type="molecule type" value="mRNA"/>
</dbReference>
<dbReference type="ConoServer" id="753">
    <property type="toxin name" value="Ar6.20 precursor"/>
</dbReference>
<dbReference type="GO" id="GO:0005576">
    <property type="term" value="C:extracellular region"/>
    <property type="evidence" value="ECO:0007669"/>
    <property type="project" value="UniProtKB-SubCell"/>
</dbReference>
<dbReference type="GO" id="GO:0008200">
    <property type="term" value="F:ion channel inhibitor activity"/>
    <property type="evidence" value="ECO:0007669"/>
    <property type="project" value="InterPro"/>
</dbReference>
<dbReference type="GO" id="GO:0090729">
    <property type="term" value="F:toxin activity"/>
    <property type="evidence" value="ECO:0007669"/>
    <property type="project" value="UniProtKB-KW"/>
</dbReference>
<dbReference type="InterPro" id="IPR004214">
    <property type="entry name" value="Conotoxin"/>
</dbReference>
<dbReference type="Pfam" id="PF02950">
    <property type="entry name" value="Conotoxin"/>
    <property type="match status" value="1"/>
</dbReference>
<protein>
    <recommendedName>
        <fullName>Conotoxin ArMSGL-0124</fullName>
    </recommendedName>
</protein>